<accession>B7MBM7</accession>
<gene>
    <name evidence="1" type="primary">mntP</name>
    <name type="synonym">yebN</name>
    <name type="ordered locus">ECS88_1873</name>
</gene>
<protein>
    <recommendedName>
        <fullName evidence="1">Probable manganese efflux pump MntP</fullName>
    </recommendedName>
</protein>
<keyword id="KW-0997">Cell inner membrane</keyword>
<keyword id="KW-1003">Cell membrane</keyword>
<keyword id="KW-0406">Ion transport</keyword>
<keyword id="KW-0464">Manganese</keyword>
<keyword id="KW-0472">Membrane</keyword>
<keyword id="KW-1185">Reference proteome</keyword>
<keyword id="KW-0812">Transmembrane</keyword>
<keyword id="KW-1133">Transmembrane helix</keyword>
<keyword id="KW-0813">Transport</keyword>
<organism>
    <name type="scientific">Escherichia coli O45:K1 (strain S88 / ExPEC)</name>
    <dbReference type="NCBI Taxonomy" id="585035"/>
    <lineage>
        <taxon>Bacteria</taxon>
        <taxon>Pseudomonadati</taxon>
        <taxon>Pseudomonadota</taxon>
        <taxon>Gammaproteobacteria</taxon>
        <taxon>Enterobacterales</taxon>
        <taxon>Enterobacteriaceae</taxon>
        <taxon>Escherichia</taxon>
    </lineage>
</organism>
<feature type="chain" id="PRO_1000200028" description="Probable manganese efflux pump MntP">
    <location>
        <begin position="1"/>
        <end position="188"/>
    </location>
</feature>
<feature type="transmembrane region" description="Helical" evidence="1">
    <location>
        <begin position="3"/>
        <end position="23"/>
    </location>
</feature>
<feature type="transmembrane region" description="Helical" evidence="1">
    <location>
        <begin position="66"/>
        <end position="86"/>
    </location>
</feature>
<feature type="transmembrane region" description="Helical" evidence="1">
    <location>
        <begin position="106"/>
        <end position="128"/>
    </location>
</feature>
<feature type="transmembrane region" description="Helical" evidence="1">
    <location>
        <begin position="143"/>
        <end position="163"/>
    </location>
</feature>
<feature type="transmembrane region" description="Helical" evidence="1">
    <location>
        <begin position="168"/>
        <end position="188"/>
    </location>
</feature>
<evidence type="ECO:0000255" key="1">
    <source>
        <dbReference type="HAMAP-Rule" id="MF_01521"/>
    </source>
</evidence>
<name>MNTP_ECO45</name>
<comment type="function">
    <text evidence="1">Probably functions as a manganese efflux pump.</text>
</comment>
<comment type="subcellular location">
    <subcellularLocation>
        <location evidence="1">Cell inner membrane</location>
        <topology evidence="1">Multi-pass membrane protein</topology>
    </subcellularLocation>
</comment>
<comment type="similarity">
    <text evidence="1">Belongs to the MntP (TC 9.B.29) family.</text>
</comment>
<dbReference type="EMBL" id="CU928161">
    <property type="protein sequence ID" value="CAR03179.1"/>
    <property type="molecule type" value="Genomic_DNA"/>
</dbReference>
<dbReference type="RefSeq" id="WP_001296134.1">
    <property type="nucleotide sequence ID" value="NC_011742.1"/>
</dbReference>
<dbReference type="GeneID" id="93776070"/>
<dbReference type="KEGG" id="ecz:ECS88_1873"/>
<dbReference type="HOGENOM" id="CLU_096410_0_0_6"/>
<dbReference type="Proteomes" id="UP000000747">
    <property type="component" value="Chromosome"/>
</dbReference>
<dbReference type="GO" id="GO:0005886">
    <property type="term" value="C:plasma membrane"/>
    <property type="evidence" value="ECO:0007669"/>
    <property type="project" value="UniProtKB-SubCell"/>
</dbReference>
<dbReference type="GO" id="GO:0005384">
    <property type="term" value="F:manganese ion transmembrane transporter activity"/>
    <property type="evidence" value="ECO:0007669"/>
    <property type="project" value="UniProtKB-UniRule"/>
</dbReference>
<dbReference type="HAMAP" id="MF_01521">
    <property type="entry name" value="MntP_pump"/>
    <property type="match status" value="1"/>
</dbReference>
<dbReference type="InterPro" id="IPR003810">
    <property type="entry name" value="Mntp/YtaF"/>
</dbReference>
<dbReference type="InterPro" id="IPR022929">
    <property type="entry name" value="Put_MntP"/>
</dbReference>
<dbReference type="NCBIfam" id="NF008546">
    <property type="entry name" value="PRK11469.1"/>
    <property type="match status" value="1"/>
</dbReference>
<dbReference type="PANTHER" id="PTHR35529">
    <property type="entry name" value="MANGANESE EFFLUX PUMP MNTP-RELATED"/>
    <property type="match status" value="1"/>
</dbReference>
<dbReference type="PANTHER" id="PTHR35529:SF1">
    <property type="entry name" value="MANGANESE EFFLUX PUMP MNTP-RELATED"/>
    <property type="match status" value="1"/>
</dbReference>
<dbReference type="Pfam" id="PF02659">
    <property type="entry name" value="Mntp"/>
    <property type="match status" value="1"/>
</dbReference>
<reference key="1">
    <citation type="journal article" date="2009" name="PLoS Genet.">
        <title>Organised genome dynamics in the Escherichia coli species results in highly diverse adaptive paths.</title>
        <authorList>
            <person name="Touchon M."/>
            <person name="Hoede C."/>
            <person name="Tenaillon O."/>
            <person name="Barbe V."/>
            <person name="Baeriswyl S."/>
            <person name="Bidet P."/>
            <person name="Bingen E."/>
            <person name="Bonacorsi S."/>
            <person name="Bouchier C."/>
            <person name="Bouvet O."/>
            <person name="Calteau A."/>
            <person name="Chiapello H."/>
            <person name="Clermont O."/>
            <person name="Cruveiller S."/>
            <person name="Danchin A."/>
            <person name="Diard M."/>
            <person name="Dossat C."/>
            <person name="Karoui M.E."/>
            <person name="Frapy E."/>
            <person name="Garry L."/>
            <person name="Ghigo J.M."/>
            <person name="Gilles A.M."/>
            <person name="Johnson J."/>
            <person name="Le Bouguenec C."/>
            <person name="Lescat M."/>
            <person name="Mangenot S."/>
            <person name="Martinez-Jehanne V."/>
            <person name="Matic I."/>
            <person name="Nassif X."/>
            <person name="Oztas S."/>
            <person name="Petit M.A."/>
            <person name="Pichon C."/>
            <person name="Rouy Z."/>
            <person name="Ruf C.S."/>
            <person name="Schneider D."/>
            <person name="Tourret J."/>
            <person name="Vacherie B."/>
            <person name="Vallenet D."/>
            <person name="Medigue C."/>
            <person name="Rocha E.P.C."/>
            <person name="Denamur E."/>
        </authorList>
    </citation>
    <scope>NUCLEOTIDE SEQUENCE [LARGE SCALE GENOMIC DNA]</scope>
    <source>
        <strain>S88 / ExPEC</strain>
    </source>
</reference>
<sequence length="188" mass="20117">MNITATVLLAFGMSMDAFAASIGKGATLHKPKFSEALRTGLIFGAVETLTPLIGWGMGMLASRFVLEWNHWIAFVLLIFLGGRMIIEGFRGADDEDEEPRRRHGFWLLVTTAIATSLDAMAVGVGLAFLQVNIIATALAIGCATLIMSTLGMMVGRFIGSIIGKKAEILGGLVLIGIGVQILWTHFHG</sequence>
<proteinExistence type="inferred from homology"/>